<reference key="1">
    <citation type="journal article" date="1995" name="J. Biol. Chem.">
        <title>Identification and characterization of a novel protein (p137) which transcytoses bidirectionally in Caco-2 cells.</title>
        <authorList>
            <person name="Ellis J.A."/>
            <person name="Luzio J.P."/>
        </authorList>
    </citation>
    <scope>NUCLEOTIDE SEQUENCE [MRNA] (ISOFORM 1)</scope>
    <scope>TISSUE SPECIFICITY</scope>
    <scope>VARIANT ASP-263</scope>
    <source>
        <tissue>Colon</tissue>
    </source>
</reference>
<reference key="2">
    <citation type="journal article" date="2006" name="Nature">
        <title>Human chromosome 11 DNA sequence and analysis including novel gene identification.</title>
        <authorList>
            <person name="Taylor T.D."/>
            <person name="Noguchi H."/>
            <person name="Totoki Y."/>
            <person name="Toyoda A."/>
            <person name="Kuroki Y."/>
            <person name="Dewar K."/>
            <person name="Lloyd C."/>
            <person name="Itoh T."/>
            <person name="Takeda T."/>
            <person name="Kim D.-W."/>
            <person name="She X."/>
            <person name="Barlow K.F."/>
            <person name="Bloom T."/>
            <person name="Bruford E."/>
            <person name="Chang J.L."/>
            <person name="Cuomo C.A."/>
            <person name="Eichler E."/>
            <person name="FitzGerald M.G."/>
            <person name="Jaffe D.B."/>
            <person name="LaButti K."/>
            <person name="Nicol R."/>
            <person name="Park H.-S."/>
            <person name="Seaman C."/>
            <person name="Sougnez C."/>
            <person name="Yang X."/>
            <person name="Zimmer A.R."/>
            <person name="Zody M.C."/>
            <person name="Birren B.W."/>
            <person name="Nusbaum C."/>
            <person name="Fujiyama A."/>
            <person name="Hattori M."/>
            <person name="Rogers J."/>
            <person name="Lander E.S."/>
            <person name="Sakaki Y."/>
        </authorList>
    </citation>
    <scope>NUCLEOTIDE SEQUENCE [LARGE SCALE GENOMIC DNA]</scope>
</reference>
<reference key="3">
    <citation type="submission" date="2005-09" db="EMBL/GenBank/DDBJ databases">
        <authorList>
            <person name="Mural R.J."/>
            <person name="Istrail S."/>
            <person name="Sutton G.G."/>
            <person name="Florea L."/>
            <person name="Halpern A.L."/>
            <person name="Mobarry C.M."/>
            <person name="Lippert R."/>
            <person name="Walenz B."/>
            <person name="Shatkay H."/>
            <person name="Dew I."/>
            <person name="Miller J.R."/>
            <person name="Flanigan M.J."/>
            <person name="Edwards N.J."/>
            <person name="Bolanos R."/>
            <person name="Fasulo D."/>
            <person name="Halldorsson B.V."/>
            <person name="Hannenhalli S."/>
            <person name="Turner R."/>
            <person name="Yooseph S."/>
            <person name="Lu F."/>
            <person name="Nusskern D.R."/>
            <person name="Shue B.C."/>
            <person name="Zheng X.H."/>
            <person name="Zhong F."/>
            <person name="Delcher A.L."/>
            <person name="Huson D.H."/>
            <person name="Kravitz S.A."/>
            <person name="Mouchard L."/>
            <person name="Reinert K."/>
            <person name="Remington K.A."/>
            <person name="Clark A.G."/>
            <person name="Waterman M.S."/>
            <person name="Eichler E.E."/>
            <person name="Adams M.D."/>
            <person name="Hunkapiller M.W."/>
            <person name="Myers E.W."/>
            <person name="Venter J.C."/>
        </authorList>
    </citation>
    <scope>NUCLEOTIDE SEQUENCE [LARGE SCALE GENOMIC DNA]</scope>
</reference>
<reference key="4">
    <citation type="journal article" date="2004" name="Genome Res.">
        <title>The status, quality, and expansion of the NIH full-length cDNA project: the Mammalian Gene Collection (MGC).</title>
        <authorList>
            <consortium name="The MGC Project Team"/>
        </authorList>
    </citation>
    <scope>NUCLEOTIDE SEQUENCE [LARGE SCALE MRNA] (ISOFORM 1)</scope>
    <source>
        <tissue>Eye</tissue>
    </source>
</reference>
<reference key="5">
    <citation type="journal article" date="1996" name="Genomics">
        <title>The gene encoding the GPI-anchored membrane protein p137GPI (M11S1) maps to human chromosome 11p13 and is highly conserved in the mouse.</title>
        <authorList>
            <person name="Gessler M."/>
            <person name="Klant B."/>
            <person name="Tsaoussidou S."/>
            <person name="Ellis J.A."/>
            <person name="Luzio J.P."/>
        </authorList>
    </citation>
    <scope>NUCLEOTIDE SEQUENCE [GENOMIC DNA] OF 29-72</scope>
</reference>
<reference key="6">
    <citation type="submission" date="2007-07" db="UniProtKB">
        <authorList>
            <person name="Bienvenut W.V."/>
            <person name="Heiserich L."/>
            <person name="Boulahbel H."/>
            <person name="Gottlieb E."/>
        </authorList>
    </citation>
    <scope>PROTEIN SEQUENCE OF 56-63; 88-110; 115-125; 148-158; 298-310 AND 634-660</scope>
    <scope>IDENTIFICATION BY MASS SPECTROMETRY</scope>
    <source>
        <tissue>Colon carcinoma</tissue>
    </source>
</reference>
<reference key="7">
    <citation type="journal article" date="2004" name="J. Immunol.">
        <title>Activation/division of lymphocytes results in increased levels of cytoplasmic activation/proliferation-associated protein-1: prototype of a new family of proteins.</title>
        <authorList>
            <person name="Grill B."/>
            <person name="Wilson G.M."/>
            <person name="Zhang K.-X."/>
            <person name="Wang B."/>
            <person name="Doyonnas R."/>
            <person name="Quadroni M."/>
            <person name="Schrader J.W."/>
        </authorList>
    </citation>
    <scope>IDENTIFICATION (ISOFORMS 1 AND 2)</scope>
    <scope>SUBCELLULAR LOCATION</scope>
    <scope>MULTIMERIZATION</scope>
</reference>
<reference key="8">
    <citation type="journal article" date="2007" name="Mol. Cell. Biol.">
        <title>Distinct structural features of caprin-1 mediate its interaction with G3BP-1 and its induction of phosphorylation of eukaryotic translation initiation factor 2alpha, entry to cytoplasmic stress granules, and selective interaction with a subset of mRNAs.</title>
        <authorList>
            <person name="Solomon S."/>
            <person name="Xu Y."/>
            <person name="Wang B."/>
            <person name="David M.D."/>
            <person name="Schubert P."/>
            <person name="Kennedy D."/>
            <person name="Schrader J.W."/>
        </authorList>
    </citation>
    <scope>FUNCTION</scope>
    <scope>SUBCELLULAR LOCATION</scope>
    <scope>INTERACTION WITH G3BP1</scope>
    <scope>MRNA-BINDING</scope>
    <scope>MUTAGENESIS OF ARG-612; ARG-633 AND ARG-690</scope>
</reference>
<reference key="9">
    <citation type="journal article" date="2010" name="J. Biol. Chem.">
        <title>RNA granule protein 140 (RNG140), a paralog of RNG105 localized to distinct RNA granules in neuronal dendrites in the adult vertebrate brain.</title>
        <authorList>
            <person name="Shiina N."/>
            <person name="Tokunaga M."/>
        </authorList>
    </citation>
    <scope>IDENTIFICATION</scope>
</reference>
<reference key="10">
    <citation type="journal article" date="2008" name="Proc. Natl. Acad. Sci. U.S.A.">
        <title>A quantitative atlas of mitotic phosphorylation.</title>
        <authorList>
            <person name="Dephoure N."/>
            <person name="Zhou C."/>
            <person name="Villen J."/>
            <person name="Beausoleil S.A."/>
            <person name="Bakalarski C.E."/>
            <person name="Elledge S.J."/>
            <person name="Gygi S.P."/>
        </authorList>
    </citation>
    <scope>IDENTIFICATION BY MASS SPECTROMETRY [LARGE SCALE ANALYSIS]</scope>
    <source>
        <tissue>Cervix carcinoma</tissue>
    </source>
</reference>
<reference key="11">
    <citation type="journal article" date="2010" name="Sci. Signal.">
        <title>Quantitative phosphoproteomics reveals widespread full phosphorylation site occupancy during mitosis.</title>
        <authorList>
            <person name="Olsen J.V."/>
            <person name="Vermeulen M."/>
            <person name="Santamaria A."/>
            <person name="Kumar C."/>
            <person name="Miller M.L."/>
            <person name="Jensen L.J."/>
            <person name="Gnad F."/>
            <person name="Cox J."/>
            <person name="Jensen T.S."/>
            <person name="Nigg E.A."/>
            <person name="Brunak S."/>
            <person name="Mann M."/>
        </authorList>
    </citation>
    <scope>PHOSPHORYLATION [LARGE SCALE ANALYSIS] AT SER-10</scope>
    <scope>IDENTIFICATION BY MASS SPECTROMETRY [LARGE SCALE ANALYSIS]</scope>
    <source>
        <tissue>Cervix carcinoma</tissue>
    </source>
</reference>
<reference key="12">
    <citation type="journal article" date="2011" name="BMC Syst. Biol.">
        <title>Initial characterization of the human central proteome.</title>
        <authorList>
            <person name="Burkard T.R."/>
            <person name="Planyavsky M."/>
            <person name="Kaupe I."/>
            <person name="Breitwieser F.P."/>
            <person name="Buerckstuemmer T."/>
            <person name="Bennett K.L."/>
            <person name="Superti-Furga G."/>
            <person name="Colinge J."/>
        </authorList>
    </citation>
    <scope>IDENTIFICATION BY MASS SPECTROMETRY [LARGE SCALE ANALYSIS]</scope>
</reference>
<reference key="13">
    <citation type="journal article" date="2011" name="Hum. Mol. Genet.">
        <title>The X-chromosome-linked intellectual disability protein PQBP1 is a component of neuronal RNA granules and regulates the appearance of stress granules.</title>
        <authorList>
            <person name="Kunde S.A."/>
            <person name="Musante L."/>
            <person name="Grimme A."/>
            <person name="Fischer U."/>
            <person name="Mueller E."/>
            <person name="Wanker E.E."/>
            <person name="Kalscheuer V.M."/>
        </authorList>
    </citation>
    <scope>INTERACTION WITH PQBP1</scope>
</reference>
<reference key="14">
    <citation type="journal article" date="2011" name="Sci. Signal.">
        <title>System-wide temporal characterization of the proteome and phosphoproteome of human embryonic stem cell differentiation.</title>
        <authorList>
            <person name="Rigbolt K.T."/>
            <person name="Prokhorova T.A."/>
            <person name="Akimov V."/>
            <person name="Henningsen J."/>
            <person name="Johansen P.T."/>
            <person name="Kratchmarova I."/>
            <person name="Kassem M."/>
            <person name="Mann M."/>
            <person name="Olsen J.V."/>
            <person name="Blagoev B."/>
        </authorList>
    </citation>
    <scope>ACETYLATION [LARGE SCALE ANALYSIS] AT PRO-2</scope>
    <scope>CLEAVAGE OF INITIATOR METHIONINE [LARGE SCALE ANALYSIS]</scope>
    <scope>IDENTIFICATION BY MASS SPECTROMETRY [LARGE SCALE ANALYSIS]</scope>
</reference>
<reference key="15">
    <citation type="journal article" date="2012" name="Biochim. Biophys. Acta">
        <title>Characterization of O-GlcNAc cycling and proteomic identification of differentially O-GlcNAcylated proteins during G1/S transition.</title>
        <authorList>
            <person name="Drougat L."/>
            <person name="Olivier-Van Stichelen S."/>
            <person name="Mortuaire M."/>
            <person name="Foulquier F."/>
            <person name="Lacoste A.S."/>
            <person name="Michalski J.C."/>
            <person name="Lefebvre T."/>
            <person name="Vercoutter-Edouart A.S."/>
        </authorList>
    </citation>
    <scope>GLYCOSYLATION</scope>
</reference>
<reference key="16">
    <citation type="journal article" date="2013" name="J. Proteome Res.">
        <title>Toward a comprehensive characterization of a human cancer cell phosphoproteome.</title>
        <authorList>
            <person name="Zhou H."/>
            <person name="Di Palma S."/>
            <person name="Preisinger C."/>
            <person name="Peng M."/>
            <person name="Polat A.N."/>
            <person name="Heck A.J."/>
            <person name="Mohammed S."/>
        </authorList>
    </citation>
    <scope>PHOSPHORYLATION [LARGE SCALE ANALYSIS] AT SER-115</scope>
    <scope>IDENTIFICATION BY MASS SPECTROMETRY [LARGE SCALE ANALYSIS]</scope>
    <source>
        <tissue>Cervix carcinoma</tissue>
    </source>
</reference>
<reference key="17">
    <citation type="journal article" date="2013" name="J. Virol.">
        <title>Japanese encephalitis virus core protein inhibits stress granule formation through an interaction with Caprin-1 and facilitates viral propagation.</title>
        <authorList>
            <person name="Katoh H."/>
            <person name="Okamoto T."/>
            <person name="Fukuhara T."/>
            <person name="Kambara H."/>
            <person name="Morita E."/>
            <person name="Mori Y."/>
            <person name="Kamitani W."/>
            <person name="Matsuura Y."/>
        </authorList>
    </citation>
    <scope>INTERACTION WITH JAPANESE ENCEPHALITIS VIRUS CAPSID PROTEIN C (MICROBIAL INFECTION)</scope>
</reference>
<reference key="18">
    <citation type="journal article" date="2014" name="J. Proteomics">
        <title>An enzyme assisted RP-RPLC approach for in-depth analysis of human liver phosphoproteome.</title>
        <authorList>
            <person name="Bian Y."/>
            <person name="Song C."/>
            <person name="Cheng K."/>
            <person name="Dong M."/>
            <person name="Wang F."/>
            <person name="Huang J."/>
            <person name="Sun D."/>
            <person name="Wang L."/>
            <person name="Ye M."/>
            <person name="Zou H."/>
        </authorList>
    </citation>
    <scope>PHOSPHORYLATION [LARGE SCALE ANALYSIS] AT SER-335 AND SER-343</scope>
    <scope>IDENTIFICATION BY MASS SPECTROMETRY [LARGE SCALE ANALYSIS]</scope>
    <source>
        <tissue>Liver</tissue>
    </source>
</reference>
<reference key="19">
    <citation type="journal article" date="2014" name="Mol. Cell. Proteomics">
        <title>Immunoaffinity enrichment and mass spectrometry analysis of protein methylation.</title>
        <authorList>
            <person name="Guo A."/>
            <person name="Gu H."/>
            <person name="Zhou J."/>
            <person name="Mulhern D."/>
            <person name="Wang Y."/>
            <person name="Lee K.A."/>
            <person name="Yang V."/>
            <person name="Aguiar M."/>
            <person name="Kornhauser J."/>
            <person name="Jia X."/>
            <person name="Ren J."/>
            <person name="Beausoleil S.A."/>
            <person name="Silva J.C."/>
            <person name="Vemulapalli V."/>
            <person name="Bedford M.T."/>
            <person name="Comb M.J."/>
        </authorList>
    </citation>
    <scope>METHYLATION [LARGE SCALE ANALYSIS] AT ARG-626; ARG-633; ARG-640 AND ARG-698</scope>
    <scope>IDENTIFICATION BY MASS SPECTROMETRY [LARGE SCALE ANALYSIS]</scope>
    <source>
        <tissue>Colon carcinoma</tissue>
    </source>
</reference>
<reference key="20">
    <citation type="journal article" date="2015" name="Proteomics">
        <title>N-terminome analysis of the human mitochondrial proteome.</title>
        <authorList>
            <person name="Vaca Jacome A.S."/>
            <person name="Rabilloud T."/>
            <person name="Schaeffer-Reiss C."/>
            <person name="Rompais M."/>
            <person name="Ayoub D."/>
            <person name="Lane L."/>
            <person name="Bairoch A."/>
            <person name="Van Dorsselaer A."/>
            <person name="Carapito C."/>
        </authorList>
    </citation>
    <scope>IDENTIFICATION BY MASS SPECTROMETRY [LARGE SCALE ANALYSIS]</scope>
</reference>
<reference key="21">
    <citation type="journal article" date="2016" name="J. Cell Biol.">
        <title>G3BP-Caprin1-USP10 complexes mediate stress granule condensation and associate with 40S subunits.</title>
        <authorList>
            <person name="Kedersha N."/>
            <person name="Panas M.D."/>
            <person name="Achorn C.A."/>
            <person name="Lyons S."/>
            <person name="Tisdale S."/>
            <person name="Hickman T."/>
            <person name="Thomas M."/>
            <person name="Lieberman J."/>
            <person name="McInerney G.M."/>
            <person name="Ivanov P."/>
            <person name="Anderson P."/>
        </authorList>
    </citation>
    <scope>INTERACTION WITH G3BP1 AND G3BP2</scope>
</reference>
<reference key="22">
    <citation type="journal article" date="2017" name="Biochem. J.">
        <title>The helicase, DDX3X, interacts with poly(A)-binding protein 1 (PABP1) and caprin-1 at the leading edge of migrating fibroblasts and is required for efficient cell spreading.</title>
        <authorList>
            <person name="Copsey A.C."/>
            <person name="Cooper S."/>
            <person name="Parker R."/>
            <person name="Lineham E."/>
            <person name="Lapworth C."/>
            <person name="Jallad D."/>
            <person name="Sweet S."/>
            <person name="Morley S.J."/>
        </authorList>
    </citation>
    <scope>INTERACTION WITH DDX3X</scope>
    <scope>SUBCELLULAR LOCATION</scope>
</reference>
<reference key="23">
    <citation type="journal article" date="2017" name="J. Virol.">
        <title>Zika virus hijacks stress granule proteins and modulates the host stress response.</title>
        <authorList>
            <person name="Hou S."/>
            <person name="Kumar A."/>
            <person name="Xu Z."/>
            <person name="Airo A.M."/>
            <person name="Stryapunina I."/>
            <person name="Wong C.P."/>
            <person name="Branton W."/>
            <person name="Tchesnokov E."/>
            <person name="Goette M."/>
            <person name="Power C."/>
            <person name="Hobman T.C."/>
        </authorList>
    </citation>
    <scope>INTERACTION WITH ZIKA VIRUS CAPSID PROTEIN C (MICROBIAL INFECTION)</scope>
</reference>
<reference key="24">
    <citation type="journal article" date="2017" name="J. Virol.">
        <title>Mammalian Orthoreovirus Factories Modulate Stress Granule Protein Localization by Interaction with G3BP1.</title>
        <authorList>
            <person name="Choudhury P."/>
            <person name="Bussiere L.D."/>
            <person name="Miller C.L."/>
        </authorList>
    </citation>
    <scope>SUBCELLULAR LOCATION (MICROBIAL INFECTION)</scope>
</reference>
<reference key="25">
    <citation type="journal article" date="2018" name="J. Virol.">
        <title>Rotavirus Induces Formation of Remodeled Stress Granules and P Bodies and Their Sequestration in Viroplasms To Promote Progeny Virus Production.</title>
        <authorList>
            <person name="Dhillon P."/>
            <person name="Rao C.D."/>
        </authorList>
    </citation>
    <scope>INTERACTION WITH ROTAVIRUS A NON-STRUCTURAL PROTEIN 5 (MICROBIAL INFECTION)</scope>
</reference>
<reference key="26">
    <citation type="journal article" date="2019" name="Science">
        <title>Phospho-dependent phase separation of FMRP and CAPRIN1 recapitulates regulation of translation and deadenylation.</title>
        <authorList>
            <person name="Kim T.H."/>
            <person name="Tsang B."/>
            <person name="Vernon R.M."/>
            <person name="Sonenberg N."/>
            <person name="Kay L.E."/>
            <person name="Forman-Kay J.D."/>
        </authorList>
    </citation>
    <scope>FUNCTION</scope>
    <scope>SUBCELLULAR LOCATION</scope>
    <scope>INTERACTION WITH FMR1</scope>
    <scope>PHOSPHORYLATION AT TYR-625; TYR-636; TYR-639; TYR-651; TYR-662; TYR-665 AND TYR-670</scope>
    <scope>DOMAIN</scope>
    <scope>MUTAGENESIS OF ARG-608; ARG-612; ARG-616; ARG-619; ARG-626; ARG-633; ARG-640; ARG-660; ARG-667; ARG-676; ARG-684; ARG-688; ARG-690; ARG-695 AND ARG-698</scope>
</reference>
<reference key="27">
    <citation type="journal article" date="2020" name="Cell">
        <title>Competing protein-RNA interaction networks control multiphase intracellular organization.</title>
        <authorList>
            <person name="Sanders D.W."/>
            <person name="Kedersha N."/>
            <person name="Lee D.S.W."/>
            <person name="Strom A.R."/>
            <person name="Drake V."/>
            <person name="Riback J.A."/>
            <person name="Bracha D."/>
            <person name="Eeftens J.M."/>
            <person name="Iwanicki A."/>
            <person name="Wang A."/>
            <person name="Wei M.T."/>
            <person name="Whitney G."/>
            <person name="Lyons S.M."/>
            <person name="Anderson P."/>
            <person name="Jacobs W.M."/>
            <person name="Ivanov P."/>
            <person name="Brangwynne C.P."/>
        </authorList>
    </citation>
    <scope>FUNCTION</scope>
    <scope>INTERACTION WITH G3BP1</scope>
</reference>
<reference key="28">
    <citation type="journal article" date="2020" name="Cell">
        <title>G3BP1 is a tunable switch that triggers phase separation to assemble stress granules.</title>
        <authorList>
            <person name="Yang P."/>
            <person name="Mathieu C."/>
            <person name="Kolaitis R.M."/>
            <person name="Zhang P."/>
            <person name="Messing J."/>
            <person name="Yurtsever U."/>
            <person name="Yang Z."/>
            <person name="Wu J."/>
            <person name="Li Y."/>
            <person name="Pan Q."/>
            <person name="Yu J."/>
            <person name="Martin E.W."/>
            <person name="Mittag T."/>
            <person name="Kim H.J."/>
            <person name="Taylor J.P."/>
        </authorList>
    </citation>
    <scope>FUNCTION</scope>
    <scope>INTERACTION WITH G3BP1</scope>
    <scope>MUTAGENESIS OF PHE-372</scope>
</reference>
<reference key="29">
    <citation type="journal article" date="2020" name="Cell">
        <title>RNA-Induced conformational switching and clustering of G3BP drive stress granule assembly by condensation.</title>
        <authorList>
            <person name="Guillen-Boixet J."/>
            <person name="Kopach A."/>
            <person name="Holehouse A.S."/>
            <person name="Wittmann S."/>
            <person name="Jahnel M."/>
            <person name="Schluessler R."/>
            <person name="Kim K."/>
            <person name="Trussina I.R.E.A."/>
            <person name="Wang J."/>
            <person name="Mateju D."/>
            <person name="Poser I."/>
            <person name="Maharana S."/>
            <person name="Ruer-Gruss M."/>
            <person name="Richter D."/>
            <person name="Zhang X."/>
            <person name="Chang Y.T."/>
            <person name="Guck J."/>
            <person name="Honigmann A."/>
            <person name="Mahamid J."/>
            <person name="Hyman A.A."/>
            <person name="Pappu R.V."/>
            <person name="Alberti S."/>
            <person name="Franzmann T.M."/>
        </authorList>
    </citation>
    <scope>FUNCTION</scope>
    <scope>INTERACTION WITH G3BP1</scope>
</reference>
<reference key="30">
    <citation type="journal article" date="2021" name="Proc. Natl. Acad. Sci. U.S.A.">
        <title>Interaction hot spots for phase separation revealed by NMR studies of a CAPRIN1 condensed phase.</title>
        <authorList>
            <person name="Kim T.H."/>
            <person name="Payliss B.J."/>
            <person name="Nosella M.L."/>
            <person name="Lee I.T.W."/>
            <person name="Toyama Y."/>
            <person name="Forman-Kay J.D."/>
            <person name="Kay L.E."/>
        </authorList>
    </citation>
    <scope>FUNCTION</scope>
    <scope>ACTIVITY REGULATION</scope>
    <scope>DOMAIN</scope>
    <scope>GLYCOSYLATION AT SER-644 AND SER-649</scope>
    <scope>MUTAGENESIS OF 624-GLY--ARG-626; 638-GLY--ARG-640; 660-ARG--TYR-662; 680-GLN--GLY-682 AND 704-ASN--GLN-706</scope>
</reference>
<reference key="31">
    <citation type="journal article" date="2022" name="J. Biol. Chem.">
        <title>Tryptophan mutations in G3BP1 tune the stability of a cellular signaling hub by weakening transient interactions with Caprin1 and USP10.</title>
        <authorList>
            <person name="Sheehan C.T."/>
            <person name="Hampton T.H."/>
            <person name="Madden D.R."/>
        </authorList>
    </citation>
    <scope>INTERACTION WITH G3BP1</scope>
    <scope>MUTAGENESIS OF TYR-370; PHE-372; ILE-373; SER-376 AND MET-377</scope>
</reference>
<reference key="32">
    <citation type="journal article" date="2022" name="Proc. Natl. Acad. Sci. U.S.A.">
        <title>Mapping the per-residue surface electrostatic potential of CAPRIN1 along its phase-separation trajectory.</title>
        <authorList>
            <person name="Toyama Y."/>
            <person name="Rangadurai A.K."/>
            <person name="Forman-Kay J.D."/>
            <person name="Kay L.E."/>
        </authorList>
    </citation>
    <scope>FUNCTION</scope>
    <scope>ACTIVITY REGULATION</scope>
    <scope>DOMAIN</scope>
</reference>
<reference key="33">
    <citation type="journal article" date="2022" name="Sci. Adv.">
        <title>De novo variants in genes regulating stress granule assembly associate with neurodevelopmental disorders.</title>
        <authorList>
            <person name="Jia X."/>
            <person name="Zhang S."/>
            <person name="Tan S."/>
            <person name="Du B."/>
            <person name="He M."/>
            <person name="Qin H."/>
            <person name="Chen J."/>
            <person name="Duan X."/>
            <person name="Luo J."/>
            <person name="Chen F."/>
            <person name="Ouyang L."/>
            <person name="Wang J."/>
            <person name="Chen G."/>
            <person name="Yu B."/>
            <person name="Zhang G."/>
            <person name="Zhang Z."/>
            <person name="Lyu Y."/>
            <person name="Huang Y."/>
            <person name="Jiao J."/>
            <person name="Chen J.Y.H."/>
            <person name="Swoboda K.J."/>
            <person name="Agolini E."/>
            <person name="Novelli A."/>
            <person name="Leoni C."/>
            <person name="Zampino G."/>
            <person name="Cappuccio G."/>
            <person name="Brunetti-Pierri N."/>
            <person name="Gerard B."/>
            <person name="Ginglinger E."/>
            <person name="Richer J."/>
            <person name="McMillan H."/>
            <person name="White-Brown A."/>
            <person name="Hoekzema K."/>
            <person name="Bernier R.A."/>
            <person name="Kurtz-Nelson E.C."/>
            <person name="Earl R.K."/>
            <person name="Meddens C."/>
            <person name="Alders M."/>
            <person name="Fuchs M."/>
            <person name="Caumes R."/>
            <person name="Brunelle P."/>
            <person name="Smol T."/>
            <person name="Kuehl R."/>
            <person name="Day-Salvatore D.L."/>
            <person name="Monaghan K.G."/>
            <person name="Morrow M.M."/>
            <person name="Eichler E.E."/>
            <person name="Hu Z."/>
            <person name="Yuan L."/>
            <person name="Tan J."/>
            <person name="Xia K."/>
            <person name="Shen Y."/>
            <person name="Guo H."/>
        </authorList>
    </citation>
    <scope>FUNCTION</scope>
    <scope>INTERACTION WITH G3BP1 AND G3BP1</scope>
    <scope>VARIANTS LYS-373; HIS-446 AND PRO-484</scope>
    <scope>CHARACTERIZATION OF VARIANTS LYS-373; HIS-446 AND PRO-484</scope>
</reference>
<reference key="34">
    <citation type="journal article" date="2023" name="Life. Sci Alliance">
        <title>N-terminal proteoforms may engage in different protein complexes.</title>
        <authorList>
            <person name="Bogaert A."/>
            <person name="Fijalkowska D."/>
            <person name="Staes A."/>
            <person name="Van de Steene T."/>
            <person name="Vuylsteke M."/>
            <person name="Stadler C."/>
            <person name="Eyckerman S."/>
            <person name="Spirohn K."/>
            <person name="Hao T."/>
            <person name="Calderwood M.A."/>
            <person name="Gevaert K."/>
        </authorList>
    </citation>
    <scope>IDENTIFICATION BY MASS SPECTROMETRY (ISOFORM 3)</scope>
    <scope>CLEAVAGE OF INITIATOR METHIONINE (ISOFORMS 1 AND 3)</scope>
    <scope>ACETYLATION AT PRO-2 (ISOFORM 1)</scope>
    <scope>ACETYLATION AT ALA-2 (ISOFORM 3)</scope>
</reference>
<reference key="35">
    <citation type="journal article" date="2022" name="Proc. Natl. Acad. Sci. U.S.A.">
        <title>Yin and yang regulation of stress granules by Caprin-1.</title>
        <authorList>
            <person name="Song D."/>
            <person name="Kuang L."/>
            <person name="Yang L."/>
            <person name="Wang L."/>
            <person name="Li H."/>
            <person name="Li X."/>
            <person name="Zhu Z."/>
            <person name="Shi C."/>
            <person name="Zhu H."/>
            <person name="Gong W."/>
        </authorList>
    </citation>
    <scope>X-RAY CRYSTALLOGRAPHY (2.46 ANGSTROMS) OF 369-378 IN COMPLEX WITH G3BP1</scope>
    <scope>INTERACTION WITH G3BP1</scope>
</reference>
<reference key="36">
    <citation type="journal article" date="2022" name="Cell. Mol. Life Sci.">
        <title>CAPRIN1P512L causes aberrant protein aggregation and associates with early-onset ataxia.</title>
        <authorList>
            <person name="Delle Vedove A."/>
            <person name="Natarajan J."/>
            <person name="Zanni G."/>
            <person name="Eckenweiler M."/>
            <person name="Muinos-Buehl A."/>
            <person name="Storbeck M."/>
            <person name="Guillen Boixet J."/>
            <person name="Barresi S."/>
            <person name="Pizzi S."/>
            <person name="Hoelker I."/>
            <person name="Koerber F."/>
            <person name="Franzmann T.M."/>
            <person name="Bertini E.S."/>
            <person name="Kirschner J."/>
            <person name="Alberti S."/>
            <person name="Tartaglia M."/>
            <person name="Wirth B."/>
        </authorList>
    </citation>
    <scope>VARIANT CONDCAC LEU-512</scope>
    <scope>INVOLVEMENT IN CONDCAC</scope>
    <scope>CHARACTERIZATION OF VARIANT CONDCAC LEU-512</scope>
</reference>
<reference key="37">
    <citation type="journal article" date="2023" name="Brain">
        <title>CAPRIN1 haploinsufficiency causes a neurodevelopmental disorder with language impairment, ADHD and ASD.</title>
        <authorList>
            <person name="Pavinato L."/>
            <person name="Delle Vedove A."/>
            <person name="Carli D."/>
            <person name="Ferrero M."/>
            <person name="Carestiato S."/>
            <person name="Howe J.L."/>
            <person name="Agolini E."/>
            <person name="Coviello D.A."/>
            <person name="van de Laar I."/>
            <person name="Au P.Y.B."/>
            <person name="Di Gregorio E."/>
            <person name="Fabbiani A."/>
            <person name="Croci S."/>
            <person name="Mencarelli M.A."/>
            <person name="Bruno L.P."/>
            <person name="Renieri A."/>
            <person name="Veltra D."/>
            <person name="Sofocleous C."/>
            <person name="Faivre L."/>
            <person name="Mazel B."/>
            <person name="Safraou H."/>
            <person name="Denomme-Pichon A.S."/>
            <person name="van Slegtenhorst M.A."/>
            <person name="Giesbertz N."/>
            <person name="van Jaarsveld R.H."/>
            <person name="Childers A."/>
            <person name="Rogers R.C."/>
            <person name="Novelli A."/>
            <person name="De Rubeis S."/>
            <person name="Buxbaum J.D."/>
            <person name="Scherer S.W."/>
            <person name="Ferrero G.B."/>
            <person name="Wirth B."/>
            <person name="Brusco A."/>
        </authorList>
    </citation>
    <scope>VARIANTS NEDLAAD 298-GLN--ASN-709 DEL; 310-LYS--ASN-709 DEL; 358-ARG--ASN-709 DEL; 399-GLN--ASN-709 DEL; 458-ARG--ASN-709 DEL AND 582-GLN--ASN-709 DEL</scope>
    <scope>INVOLVEMENT IN NEDLAAD</scope>
    <scope>SUBCELLULAR LOCATION</scope>
    <scope>FUNCTION</scope>
</reference>
<accession>Q14444</accession>
<accession>A6NMY7</accession>
<accession>D3DR06</accession>
<accession>Q15074</accession>
<accession>Q6IMN4</accession>
<accession>Q6IMN7</accession>
<accession>Q9BV09</accession>
<protein>
    <recommendedName>
        <fullName evidence="27">Caprin-1</fullName>
    </recommendedName>
    <alternativeName>
        <fullName>Cell cycle-associated protein 1</fullName>
    </alternativeName>
    <alternativeName>
        <fullName>Cytoplasmic activation- and proliferation-associated protein 1</fullName>
    </alternativeName>
    <alternativeName>
        <fullName>GPI-anchored membrane protein 1</fullName>
    </alternativeName>
    <alternativeName>
        <fullName evidence="29">GPI-anchored protein p137</fullName>
        <shortName evidence="29">GPI-p137</shortName>
        <shortName evidence="29">p137GPI</shortName>
    </alternativeName>
    <alternativeName>
        <fullName>Membrane component chromosome 11 surface marker 1</fullName>
    </alternativeName>
    <alternativeName>
        <fullName>RNA granule protein 105</fullName>
    </alternativeName>
</protein>
<comment type="function">
    <text evidence="5 14 15 16 18 19 20 21 24">mRNA-binding protein that acts as a regulator of mRNAs transport, translation and/or stability, and which is involved in neurogenesis, synaptic plasticity in neurons and cell proliferation and migration in multiple cell types (PubMed:17210633, PubMed:31439799, PubMed:35979925). Plays an essential role in cytoplasmic stress granule formation (PubMed:35977029). Acts as an mRNA regulator by mediating formation of some phase-separated membraneless compartment: undergoes liquid-liquid phase separation upon binding to target mRNAs, leading to assemble mRNAs into cytoplasmic ribonucleoprotein granules that concentrate mRNAs with associated regulatory factors (PubMed:31439799, PubMed:32302570, PubMed:32302571, PubMed:32302572, PubMed:34074792, PubMed:36040869, PubMed:36279435). Undergoes liquid-liquid phase separation following phosphorylation and interaction with FMR1, promoting formation of cytoplasmic ribonucleoprotein granules that concentrate mRNAs with factors that inhibit translation and mediate deadenylation of target mRNAs (PubMed:31439799). In these cytoplasmic ribonucleoprotein granules, CAPRIN1 mediates recruitment of CNOT7 deadenylase, leading to mRNA deadenylation and degradation (PubMed:31439799). Binds directly and selectively to MYC and CCND2 mRNAs (PubMed:17210633). In neuronal cells, directly binds to several mRNAs associated with RNA granules, including BDNF, CAMK2A, CREB1, MAP2, NTRK2 mRNAs, as well as to GRIN1 and KPNB1 mRNAs, but not to rRNAs (PubMed:17210633).</text>
</comment>
<comment type="activity regulation">
    <text evidence="18 21">Ability to mediate liquid-liquid phase separation is regulated by ATP: moderate concentrations of ATP enhance phase separation, whereas high concentrations of ATP lead to inhibition of phase separation.</text>
</comment>
<comment type="subunit">
    <text evidence="4 5 6 9 11 14 15 16 17 19 23">May form homomultimers (PubMed:14764709). Interacts with G3BP1; interaction is direct and promotes stress granule formation (PubMed:17210633, PubMed:27022092, PubMed:32302570, PubMed:32302571, PubMed:32302572, PubMed:35977029, PubMed:36183834, PubMed:36279435). Interacts with G3BP2; interaction is direct and promotes stress granule formation (PubMed:27022092, PubMed:35977029). Interacts with PQBP1 (PubMed:21933836). Interacts with DDX3X (PubMed:28733330). Interacts (when phosphorylated by EPHA4) with FMR1; interaction with FMR1 promotes formation of a membraneless compartment (PubMed:31439799).</text>
</comment>
<comment type="subunit">
    <text evidence="10">(Microbial infection) Interacts with Zika virus capsid protein C; this interaction is probably linked to the inhibition of stress granules formation by the virus.</text>
</comment>
<comment type="subunit">
    <text evidence="13">(Microbial infection) Interacts with rotavirus A non-structural protein 5; this interaction probably plays a role in the sequestration of CAPRIN1 in viral factories.</text>
</comment>
<comment type="subunit">
    <text evidence="8">(Microbial infection) Interacts with Japanese encephalitis virus capsid protein C; this interaction is involved in the suppression of the integrated stress response by the virus.</text>
</comment>
<comment type="interaction">
    <interactant intactId="EBI-1047080">
        <id>Q14444</id>
    </interactant>
    <interactant intactId="EBI-740459">
        <id>P51116</id>
        <label>FXR2</label>
    </interactant>
    <organismsDiffer>false</organismsDiffer>
    <experiments>3</experiments>
</comment>
<comment type="interaction">
    <interactant intactId="EBI-1047080">
        <id>Q14444</id>
    </interactant>
    <interactant intactId="EBI-1047359">
        <id>Q13283</id>
        <label>G3BP1</label>
    </interactant>
    <organismsDiffer>false</organismsDiffer>
    <experiments>8</experiments>
</comment>
<comment type="subcellular location">
    <subcellularLocation>
        <location evidence="5 14">Cytoplasm</location>
        <location evidence="5 14">Cytoplasmic ribonucleoprotein granule</location>
    </subcellularLocation>
    <subcellularLocation>
        <location evidence="11">Cytoplasm</location>
        <location evidence="11">Cytosol</location>
    </subcellularLocation>
    <subcellularLocation>
        <location evidence="20">Cell projection</location>
        <location evidence="20">Dendrite</location>
    </subcellularLocation>
    <subcellularLocation>
        <location evidence="11">Cell projection</location>
        <location evidence="11">Lamellipodium</location>
    </subcellularLocation>
    <text evidence="11 14">Mediates formation and localizes to cytoplasmic ribonucleoprotein membraneless compartments (PubMed:31439799). Associated with RNA granules. At the leading edge of migrating fibroblasts, colocalizes with DDX3X (PubMed:28733330).</text>
</comment>
<comment type="subcellular location">
    <subcellularLocation>
        <location>Cytoplasm</location>
        <location>Cytosol</location>
    </subcellularLocation>
    <text evidence="12">(Microbial infection) In case of reovirus infection, associates with the outer peripheries of viral factories in a G3BP1 dependent manner.</text>
</comment>
<comment type="alternative products">
    <event type="alternative splicing"/>
    <isoform>
        <id>Q14444-1</id>
        <name>1</name>
        <sequence type="displayed"/>
    </isoform>
    <isoform>
        <id>Q14444-2</id>
        <name>2</name>
        <sequence type="described" ref="VSP_032687"/>
    </isoform>
    <isoform>
        <id>Q14444-3</id>
        <name>3</name>
        <sequence type="described" ref="VSP_062521"/>
    </isoform>
</comment>
<comment type="tissue specificity">
    <text evidence="26">Ubiquitous.</text>
</comment>
<comment type="domain">
    <text evidence="14 18 21">The C-terminal disordered region undergoes liquid-liquid phase separation (LLPS) for the formation of a membraneless compartment that concentrates mRNAs with associated regulatory factors (PubMed:31439799, PubMed:34074792, PubMed:36040869). CAPRIN1 molecules in the condensed phase are neutral (PubMed:36040869). mRNA-binding promotes phase separation (PubMed:31439799). Moderate concentrations of ATP enhance phase separation by reducing the electrostatic potential of CAPRIN1, thereby promoting intermolecular interactions (PubMed:34074792, PubMed:36040869). In contrast, high concentrations of ATP invert the electrostatic potential of CAPRIN1, so that CAPRIN1 molecules become negatively charged, lead to inhibition of phase separation (PubMed:36040869).</text>
</comment>
<comment type="PTM">
    <text evidence="14">Tyrosine phosphorylation by EPHA4 promotes interaction with FMR1 and liquid-liquid phase separation (LLPS) for the formation of a membraneless compartment that concentrates mRNAs with associated regulatory factors.</text>
</comment>
<comment type="PTM">
    <text evidence="7 18">O-glycosylated (O-GlcNAcylated), in a cell cycle-dependent manner (PubMed:22967762). O-glycosylation by OGT inhibit ability to undergo liquid-liquid phase separation (LLPS) (PubMed:34074792).</text>
</comment>
<comment type="disease" evidence="22">
    <disease id="DI-06807">
        <name>Neurodegeneration, childhood-onset, with cerebellar ataxia and cognitive decline</name>
        <acronym>CONDCAC</acronym>
        <description>A neurodegenerative disorder characterized by early-onset ataxia, dysarthria, cognitive decline, sensorimotor axonal neuropathy and muscle weakness. Brain imaging shows cerebellar atrophy.</description>
        <dbReference type="MIM" id="620636"/>
    </disease>
    <text>The disease is caused by variants affecting the gene represented in this entry.</text>
</comment>
<comment type="disease" evidence="20">
    <disease id="DI-06881">
        <name>Neurodevelopmental disorder with language impairment, autism, and attention deficit-hyperactivity disorder</name>
        <acronym>NEDLAAD</acronym>
        <description>An autosomal dominant disorder with variable expressivity and incomplete penetrance. It is characterized by language impairment, speech delay, intellectual disability, attention deficit hyperactivity disorder and autism spectrum disorder. Additional variable features include developmental delay, seizures, skeletal anomalies, respiratory difficulties, and ophthalmologic anomalies.</description>
        <dbReference type="MIM" id="620782"/>
    </disease>
    <text>The disease is caused by variants affecting the gene represented in this entry.</text>
</comment>
<comment type="similarity">
    <text evidence="30">Belongs to the caprin family.</text>
</comment>
<comment type="caution">
    <text evidence="31">Was originally thought to be a GPI-anchored membrane protein.</text>
</comment>
<comment type="sequence caution" evidence="30">
    <conflict type="erroneous gene model prediction">
        <sequence resource="EMBL-CDS" id="CAA61751"/>
    </conflict>
</comment>
<comment type="sequence caution" evidence="30">
    <conflict type="frameshift">
        <sequence resource="EMBL-CDS" id="CAA88096"/>
    </conflict>
</comment>
<organism>
    <name type="scientific">Homo sapiens</name>
    <name type="common">Human</name>
    <dbReference type="NCBI Taxonomy" id="9606"/>
    <lineage>
        <taxon>Eukaryota</taxon>
        <taxon>Metazoa</taxon>
        <taxon>Chordata</taxon>
        <taxon>Craniata</taxon>
        <taxon>Vertebrata</taxon>
        <taxon>Euteleostomi</taxon>
        <taxon>Mammalia</taxon>
        <taxon>Eutheria</taxon>
        <taxon>Euarchontoglires</taxon>
        <taxon>Primates</taxon>
        <taxon>Haplorrhini</taxon>
        <taxon>Catarrhini</taxon>
        <taxon>Hominidae</taxon>
        <taxon>Homo</taxon>
    </lineage>
</organism>
<keyword id="KW-0002">3D-structure</keyword>
<keyword id="KW-0007">Acetylation</keyword>
<keyword id="KW-0025">Alternative splicing</keyword>
<keyword id="KW-0067">ATP-binding</keyword>
<keyword id="KW-1269">Autism</keyword>
<keyword id="KW-1268">Autism spectrum disorder</keyword>
<keyword id="KW-0966">Cell projection</keyword>
<keyword id="KW-0175">Coiled coil</keyword>
<keyword id="KW-0963">Cytoplasm</keyword>
<keyword id="KW-0221">Differentiation</keyword>
<keyword id="KW-0903">Direct protein sequencing</keyword>
<keyword id="KW-0225">Disease variant</keyword>
<keyword id="KW-0325">Glycoprotein</keyword>
<keyword id="KW-0991">Intellectual disability</keyword>
<keyword id="KW-0488">Methylation</keyword>
<keyword id="KW-0523">Neurodegeneration</keyword>
<keyword id="KW-0547">Nucleotide-binding</keyword>
<keyword id="KW-0597">Phosphoprotein</keyword>
<keyword id="KW-0652">Protein synthesis inhibitor</keyword>
<keyword id="KW-1267">Proteomics identification</keyword>
<keyword id="KW-1185">Reference proteome</keyword>
<keyword id="KW-0694">RNA-binding</keyword>
<name>CAPR1_HUMAN</name>
<proteinExistence type="evidence at protein level"/>
<evidence type="ECO:0000250" key="1">
    <source>
        <dbReference type="UniProtKB" id="Q60865"/>
    </source>
</evidence>
<evidence type="ECO:0000255" key="2"/>
<evidence type="ECO:0000256" key="3">
    <source>
        <dbReference type="SAM" id="MobiDB-lite"/>
    </source>
</evidence>
<evidence type="ECO:0000269" key="4">
    <source>
    </source>
</evidence>
<evidence type="ECO:0000269" key="5">
    <source>
    </source>
</evidence>
<evidence type="ECO:0000269" key="6">
    <source>
    </source>
</evidence>
<evidence type="ECO:0000269" key="7">
    <source>
    </source>
</evidence>
<evidence type="ECO:0000269" key="8">
    <source>
    </source>
</evidence>
<evidence type="ECO:0000269" key="9">
    <source>
    </source>
</evidence>
<evidence type="ECO:0000269" key="10">
    <source>
    </source>
</evidence>
<evidence type="ECO:0000269" key="11">
    <source>
    </source>
</evidence>
<evidence type="ECO:0000269" key="12">
    <source>
    </source>
</evidence>
<evidence type="ECO:0000269" key="13">
    <source>
    </source>
</evidence>
<evidence type="ECO:0000269" key="14">
    <source>
    </source>
</evidence>
<evidence type="ECO:0000269" key="15">
    <source>
    </source>
</evidence>
<evidence type="ECO:0000269" key="16">
    <source>
    </source>
</evidence>
<evidence type="ECO:0000269" key="17">
    <source>
    </source>
</evidence>
<evidence type="ECO:0000269" key="18">
    <source>
    </source>
</evidence>
<evidence type="ECO:0000269" key="19">
    <source>
    </source>
</evidence>
<evidence type="ECO:0000269" key="20">
    <source>
    </source>
</evidence>
<evidence type="ECO:0000269" key="21">
    <source>
    </source>
</evidence>
<evidence type="ECO:0000269" key="22">
    <source>
    </source>
</evidence>
<evidence type="ECO:0000269" key="23">
    <source>
    </source>
</evidence>
<evidence type="ECO:0000269" key="24">
    <source>
    </source>
</evidence>
<evidence type="ECO:0000269" key="25">
    <source>
    </source>
</evidence>
<evidence type="ECO:0000269" key="26">
    <source>
    </source>
</evidence>
<evidence type="ECO:0000303" key="27">
    <source>
    </source>
</evidence>
<evidence type="ECO:0000303" key="28">
    <source>
    </source>
</evidence>
<evidence type="ECO:0000303" key="29">
    <source>
    </source>
</evidence>
<evidence type="ECO:0000305" key="30"/>
<evidence type="ECO:0000305" key="31">
    <source>
    </source>
</evidence>
<evidence type="ECO:0000312" key="32">
    <source>
        <dbReference type="HGNC" id="HGNC:6743"/>
    </source>
</evidence>
<evidence type="ECO:0007744" key="33">
    <source>
    </source>
</evidence>
<evidence type="ECO:0007744" key="34">
    <source>
    </source>
</evidence>
<evidence type="ECO:0007744" key="35">
    <source>
    </source>
</evidence>
<evidence type="ECO:0007744" key="36">
    <source>
    </source>
</evidence>
<evidence type="ECO:0007744" key="37">
    <source>
    </source>
</evidence>
<evidence type="ECO:0007829" key="38">
    <source>
        <dbReference type="PDB" id="4WBE"/>
    </source>
</evidence>
<evidence type="ECO:0007829" key="39">
    <source>
        <dbReference type="PDB" id="4WBP"/>
    </source>
</evidence>
<evidence type="ECO:0007829" key="40">
    <source>
        <dbReference type="PDB" id="6TA7"/>
    </source>
</evidence>
<dbReference type="EMBL" id="Z48042">
    <property type="protein sequence ID" value="CAA88096.1"/>
    <property type="status" value="ALT_FRAME"/>
    <property type="molecule type" value="mRNA"/>
</dbReference>
<dbReference type="EMBL" id="AC090469">
    <property type="status" value="NOT_ANNOTATED_CDS"/>
    <property type="molecule type" value="Genomic_DNA"/>
</dbReference>
<dbReference type="EMBL" id="CH471064">
    <property type="protein sequence ID" value="EAW68177.1"/>
    <property type="molecule type" value="Genomic_DNA"/>
</dbReference>
<dbReference type="EMBL" id="CH471064">
    <property type="protein sequence ID" value="EAW68178.1"/>
    <property type="molecule type" value="Genomic_DNA"/>
</dbReference>
<dbReference type="EMBL" id="CH471064">
    <property type="protein sequence ID" value="EAW68179.1"/>
    <property type="molecule type" value="Genomic_DNA"/>
</dbReference>
<dbReference type="EMBL" id="BC001731">
    <property type="protein sequence ID" value="AAH01731.2"/>
    <property type="molecule type" value="mRNA"/>
</dbReference>
<dbReference type="EMBL" id="X89572">
    <property type="protein sequence ID" value="CAA61751.1"/>
    <property type="status" value="ALT_SEQ"/>
    <property type="molecule type" value="Genomic_DNA"/>
</dbReference>
<dbReference type="EMBL" id="BK001101">
    <property type="protein sequence ID" value="DAA01118.1"/>
    <property type="molecule type" value="mRNA"/>
</dbReference>
<dbReference type="EMBL" id="BK001104">
    <property type="protein sequence ID" value="DAA01121.1"/>
    <property type="molecule type" value="mRNA"/>
</dbReference>
<dbReference type="EMBL" id="BR000867">
    <property type="protein sequence ID" value="FAA00692.1"/>
    <property type="molecule type" value="mRNA"/>
</dbReference>
<dbReference type="CCDS" id="CCDS31453.1">
    <molecule id="Q14444-1"/>
</dbReference>
<dbReference type="CCDS" id="CCDS31454.1">
    <molecule id="Q14444-2"/>
</dbReference>
<dbReference type="PIR" id="A57352">
    <property type="entry name" value="A57352"/>
</dbReference>
<dbReference type="RefSeq" id="NP_005889.3">
    <molecule id="Q14444-1"/>
    <property type="nucleotide sequence ID" value="NM_005898.4"/>
</dbReference>
<dbReference type="RefSeq" id="NP_976240.1">
    <molecule id="Q14444-2"/>
    <property type="nucleotide sequence ID" value="NM_203364.3"/>
</dbReference>
<dbReference type="RefSeq" id="XP_016873238.1">
    <property type="nucleotide sequence ID" value="XM_017017749.1"/>
</dbReference>
<dbReference type="RefSeq" id="XP_047282915.1">
    <molecule id="Q14444-1"/>
    <property type="nucleotide sequence ID" value="XM_047426959.1"/>
</dbReference>
<dbReference type="PDB" id="4WBE">
    <property type="method" value="X-ray"/>
    <property type="resolution" value="2.05 A"/>
    <property type="chains" value="A/B/C=132-251"/>
</dbReference>
<dbReference type="PDB" id="4WBP">
    <property type="method" value="X-ray"/>
    <property type="resolution" value="2.50 A"/>
    <property type="chains" value="A/B=132-251"/>
</dbReference>
<dbReference type="PDB" id="6TA7">
    <property type="method" value="X-ray"/>
    <property type="resolution" value="1.93 A"/>
    <property type="chains" value="G/H=356-386"/>
</dbReference>
<dbReference type="PDB" id="7XHG">
    <property type="method" value="X-ray"/>
    <property type="resolution" value="2.46 A"/>
    <property type="chains" value="E/F/G=369-378"/>
</dbReference>
<dbReference type="PDB" id="8TH7">
    <property type="method" value="X-ray"/>
    <property type="resolution" value="2.88 A"/>
    <property type="chains" value="C/D=360-381"/>
</dbReference>
<dbReference type="PDBsum" id="4WBE"/>
<dbReference type="PDBsum" id="4WBP"/>
<dbReference type="PDBsum" id="6TA7"/>
<dbReference type="PDBsum" id="7XHG"/>
<dbReference type="PDBsum" id="8TH7"/>
<dbReference type="SMR" id="Q14444"/>
<dbReference type="BioGRID" id="110252">
    <property type="interactions" value="461"/>
</dbReference>
<dbReference type="CORUM" id="Q14444"/>
<dbReference type="FunCoup" id="Q14444">
    <property type="interactions" value="3099"/>
</dbReference>
<dbReference type="IntAct" id="Q14444">
    <property type="interactions" value="234"/>
</dbReference>
<dbReference type="MINT" id="Q14444"/>
<dbReference type="STRING" id="9606.ENSP00000340329"/>
<dbReference type="ChEMBL" id="CHEMBL4295821"/>
<dbReference type="GlyCosmos" id="Q14444">
    <property type="glycosylation" value="5 sites, 1 glycan"/>
</dbReference>
<dbReference type="GlyGen" id="Q14444">
    <property type="glycosylation" value="16 sites, 1 O-linked glycan (14 sites)"/>
</dbReference>
<dbReference type="iPTMnet" id="Q14444"/>
<dbReference type="MetOSite" id="Q14444"/>
<dbReference type="PhosphoSitePlus" id="Q14444"/>
<dbReference type="SwissPalm" id="Q14444"/>
<dbReference type="BioMuta" id="CAPRIN1"/>
<dbReference type="DMDM" id="182676426"/>
<dbReference type="CPTAC" id="CPTAC-37"/>
<dbReference type="CPTAC" id="CPTAC-38"/>
<dbReference type="jPOST" id="Q14444"/>
<dbReference type="MassIVE" id="Q14444"/>
<dbReference type="PaxDb" id="9606-ENSP00000340329"/>
<dbReference type="PeptideAtlas" id="Q14444"/>
<dbReference type="ProteomicsDB" id="59992">
    <molecule id="Q14444-1"/>
</dbReference>
<dbReference type="ProteomicsDB" id="59993">
    <molecule id="Q14444-2"/>
</dbReference>
<dbReference type="Pumba" id="Q14444"/>
<dbReference type="Antibodypedia" id="12960">
    <property type="antibodies" value="337 antibodies from 32 providers"/>
</dbReference>
<dbReference type="DNASU" id="4076"/>
<dbReference type="Ensembl" id="ENST00000341394.9">
    <molecule id="Q14444-1"/>
    <property type="protein sequence ID" value="ENSP00000340329.4"/>
    <property type="gene ID" value="ENSG00000135387.21"/>
</dbReference>
<dbReference type="Ensembl" id="ENST00000389645.7">
    <molecule id="Q14444-2"/>
    <property type="protein sequence ID" value="ENSP00000374296.3"/>
    <property type="gene ID" value="ENSG00000135387.21"/>
</dbReference>
<dbReference type="Ensembl" id="ENST00000530820.5">
    <molecule id="Q14444-2"/>
    <property type="protein sequence ID" value="ENSP00000434204.1"/>
    <property type="gene ID" value="ENSG00000135387.21"/>
</dbReference>
<dbReference type="Ensembl" id="ENST00000532820.5">
    <molecule id="Q14444-1"/>
    <property type="protein sequence ID" value="ENSP00000434150.1"/>
    <property type="gene ID" value="ENSG00000135387.21"/>
</dbReference>
<dbReference type="GeneID" id="4076"/>
<dbReference type="KEGG" id="hsa:4076"/>
<dbReference type="MANE-Select" id="ENST00000341394.9">
    <property type="protein sequence ID" value="ENSP00000340329.4"/>
    <property type="RefSeq nucleotide sequence ID" value="NM_005898.5"/>
    <property type="RefSeq protein sequence ID" value="NP_005889.3"/>
</dbReference>
<dbReference type="UCSC" id="uc001mvg.4">
    <molecule id="Q14444-1"/>
    <property type="organism name" value="human"/>
</dbReference>
<dbReference type="AGR" id="HGNC:6743"/>
<dbReference type="CTD" id="4076"/>
<dbReference type="DisGeNET" id="4076"/>
<dbReference type="GeneCards" id="CAPRIN1"/>
<dbReference type="HGNC" id="HGNC:6743">
    <property type="gene designation" value="CAPRIN1"/>
</dbReference>
<dbReference type="HPA" id="ENSG00000135387">
    <property type="expression patterns" value="Low tissue specificity"/>
</dbReference>
<dbReference type="MalaCards" id="CAPRIN1"/>
<dbReference type="MIM" id="601178">
    <property type="type" value="gene"/>
</dbReference>
<dbReference type="MIM" id="620636">
    <property type="type" value="phenotype"/>
</dbReference>
<dbReference type="MIM" id="620782">
    <property type="type" value="phenotype"/>
</dbReference>
<dbReference type="neXtProt" id="NX_Q14444"/>
<dbReference type="OpenTargets" id="ENSG00000135387"/>
<dbReference type="Orphanet" id="528084">
    <property type="disease" value="Non-specific syndromic intellectual disability"/>
</dbReference>
<dbReference type="PharmGKB" id="PA30508"/>
<dbReference type="VEuPathDB" id="HostDB:ENSG00000135387"/>
<dbReference type="eggNOG" id="ENOG502QUGC">
    <property type="taxonomic scope" value="Eukaryota"/>
</dbReference>
<dbReference type="GeneTree" id="ENSGT00940000153438"/>
<dbReference type="InParanoid" id="Q14444"/>
<dbReference type="OMA" id="GNNHWNS"/>
<dbReference type="OrthoDB" id="10062814at2759"/>
<dbReference type="PAN-GO" id="Q14444">
    <property type="GO annotations" value="2 GO annotations based on evolutionary models"/>
</dbReference>
<dbReference type="PhylomeDB" id="Q14444"/>
<dbReference type="TreeFam" id="TF329471"/>
<dbReference type="PathwayCommons" id="Q14444"/>
<dbReference type="SignaLink" id="Q14444"/>
<dbReference type="SIGNOR" id="Q14444"/>
<dbReference type="BioGRID-ORCS" id="4076">
    <property type="hits" value="71 hits in 1159 CRISPR screens"/>
</dbReference>
<dbReference type="CD-CODE" id="11D8DE05">
    <property type="entry name" value="Synthetic Condensate 000317"/>
</dbReference>
<dbReference type="CD-CODE" id="232F8A39">
    <property type="entry name" value="P-body"/>
</dbReference>
<dbReference type="CD-CODE" id="D8E9712B">
    <property type="entry name" value="Neuronal RNP granule"/>
</dbReference>
<dbReference type="CD-CODE" id="DEE660B4">
    <property type="entry name" value="Stress granule"/>
</dbReference>
<dbReference type="ChiTaRS" id="CAPRIN1">
    <property type="organism name" value="human"/>
</dbReference>
<dbReference type="EvolutionaryTrace" id="Q14444"/>
<dbReference type="GeneWiki" id="CAPRIN1"/>
<dbReference type="GenomeRNAi" id="4076"/>
<dbReference type="Pharos" id="Q14444">
    <property type="development level" value="Tbio"/>
</dbReference>
<dbReference type="PRO" id="PR:Q14444"/>
<dbReference type="Proteomes" id="UP000005640">
    <property type="component" value="Chromosome 11"/>
</dbReference>
<dbReference type="RNAct" id="Q14444">
    <property type="molecule type" value="protein"/>
</dbReference>
<dbReference type="Bgee" id="ENSG00000135387">
    <property type="expression patterns" value="Expressed in cortical plate and 213 other cell types or tissues"/>
</dbReference>
<dbReference type="ExpressionAtlas" id="Q14444">
    <property type="expression patterns" value="baseline and differential"/>
</dbReference>
<dbReference type="GO" id="GO:0031252">
    <property type="term" value="C:cell leading edge"/>
    <property type="evidence" value="ECO:0000314"/>
    <property type="project" value="UniProtKB"/>
</dbReference>
<dbReference type="GO" id="GO:0005737">
    <property type="term" value="C:cytoplasm"/>
    <property type="evidence" value="ECO:0000314"/>
    <property type="project" value="UniProtKB"/>
</dbReference>
<dbReference type="GO" id="GO:0010494">
    <property type="term" value="C:cytoplasmic stress granule"/>
    <property type="evidence" value="ECO:0000250"/>
    <property type="project" value="UniProtKB"/>
</dbReference>
<dbReference type="GO" id="GO:0005829">
    <property type="term" value="C:cytosol"/>
    <property type="evidence" value="ECO:0000314"/>
    <property type="project" value="HPA"/>
</dbReference>
<dbReference type="GO" id="GO:0030425">
    <property type="term" value="C:dendrite"/>
    <property type="evidence" value="ECO:0007669"/>
    <property type="project" value="UniProtKB-SubCell"/>
</dbReference>
<dbReference type="GO" id="GO:0043232">
    <property type="term" value="C:intracellular membraneless organelle"/>
    <property type="evidence" value="ECO:0000314"/>
    <property type="project" value="UniProtKB"/>
</dbReference>
<dbReference type="GO" id="GO:0030027">
    <property type="term" value="C:lamellipodium"/>
    <property type="evidence" value="ECO:0007669"/>
    <property type="project" value="UniProtKB-SubCell"/>
</dbReference>
<dbReference type="GO" id="GO:0016020">
    <property type="term" value="C:membrane"/>
    <property type="evidence" value="ECO:0007005"/>
    <property type="project" value="UniProtKB"/>
</dbReference>
<dbReference type="GO" id="GO:0000932">
    <property type="term" value="C:P-body"/>
    <property type="evidence" value="ECO:0000250"/>
    <property type="project" value="UniProtKB"/>
</dbReference>
<dbReference type="GO" id="GO:0045202">
    <property type="term" value="C:synapse"/>
    <property type="evidence" value="ECO:0007669"/>
    <property type="project" value="Ensembl"/>
</dbReference>
<dbReference type="GO" id="GO:0005524">
    <property type="term" value="F:ATP binding"/>
    <property type="evidence" value="ECO:0000314"/>
    <property type="project" value="UniProtKB"/>
</dbReference>
<dbReference type="GO" id="GO:0140693">
    <property type="term" value="F:molecular condensate scaffold activity"/>
    <property type="evidence" value="ECO:0000314"/>
    <property type="project" value="UniProtKB"/>
</dbReference>
<dbReference type="GO" id="GO:0140677">
    <property type="term" value="F:molecular function activator activity"/>
    <property type="evidence" value="ECO:0000314"/>
    <property type="project" value="UniProt"/>
</dbReference>
<dbReference type="GO" id="GO:0003729">
    <property type="term" value="F:mRNA binding"/>
    <property type="evidence" value="ECO:0000314"/>
    <property type="project" value="UniProt"/>
</dbReference>
<dbReference type="GO" id="GO:0003723">
    <property type="term" value="F:RNA binding"/>
    <property type="evidence" value="ECO:0007005"/>
    <property type="project" value="UniProtKB"/>
</dbReference>
<dbReference type="GO" id="GO:0035591">
    <property type="term" value="F:signaling adaptor activity"/>
    <property type="evidence" value="ECO:0000314"/>
    <property type="project" value="UniProt"/>
</dbReference>
<dbReference type="GO" id="GO:0048699">
    <property type="term" value="P:generation of neurons"/>
    <property type="evidence" value="ECO:0007669"/>
    <property type="project" value="Ensembl"/>
</dbReference>
<dbReference type="GO" id="GO:0008298">
    <property type="term" value="P:intracellular mRNA localization"/>
    <property type="evidence" value="ECO:0007669"/>
    <property type="project" value="Ensembl"/>
</dbReference>
<dbReference type="GO" id="GO:0140694">
    <property type="term" value="P:membraneless organelle assembly"/>
    <property type="evidence" value="ECO:0000314"/>
    <property type="project" value="UniProt"/>
</dbReference>
<dbReference type="GO" id="GO:0017148">
    <property type="term" value="P:negative regulation of translation"/>
    <property type="evidence" value="ECO:0000314"/>
    <property type="project" value="UniProt"/>
</dbReference>
<dbReference type="GO" id="GO:0050775">
    <property type="term" value="P:positive regulation of dendrite morphogenesis"/>
    <property type="evidence" value="ECO:0000250"/>
    <property type="project" value="UniProtKB"/>
</dbReference>
<dbReference type="GO" id="GO:0061003">
    <property type="term" value="P:positive regulation of dendritic spine morphogenesis"/>
    <property type="evidence" value="ECO:0000250"/>
    <property type="project" value="UniProtKB"/>
</dbReference>
<dbReference type="GO" id="GO:0062029">
    <property type="term" value="P:positive regulation of stress granule assembly"/>
    <property type="evidence" value="ECO:0000314"/>
    <property type="project" value="UniProtKB"/>
</dbReference>
<dbReference type="GO" id="GO:0106288">
    <property type="term" value="P:regulation of deadenylation-dependent decapping of nuclear-transcribed mRNA"/>
    <property type="evidence" value="ECO:0000314"/>
    <property type="project" value="UniProtKB"/>
</dbReference>
<dbReference type="GO" id="GO:0007416">
    <property type="term" value="P:synapse assembly"/>
    <property type="evidence" value="ECO:0007669"/>
    <property type="project" value="Ensembl"/>
</dbReference>
<dbReference type="DisProt" id="DP02916"/>
<dbReference type="IDEAL" id="IID00668"/>
<dbReference type="InterPro" id="IPR028816">
    <property type="entry name" value="Caprin"/>
</dbReference>
<dbReference type="InterPro" id="IPR022070">
    <property type="entry name" value="Caprin-1_C"/>
</dbReference>
<dbReference type="InterPro" id="IPR041637">
    <property type="entry name" value="Caprin-1_dimer"/>
</dbReference>
<dbReference type="PANTHER" id="PTHR22922:SF3">
    <property type="entry name" value="CAPRIN-1"/>
    <property type="match status" value="1"/>
</dbReference>
<dbReference type="PANTHER" id="PTHR22922">
    <property type="entry name" value="GPI-ANCHORED PROTEIN P137"/>
    <property type="match status" value="1"/>
</dbReference>
<dbReference type="Pfam" id="PF12287">
    <property type="entry name" value="Caprin-1_C"/>
    <property type="match status" value="1"/>
</dbReference>
<dbReference type="Pfam" id="PF18293">
    <property type="entry name" value="Caprin-1_dimer"/>
    <property type="match status" value="1"/>
</dbReference>
<feature type="initiator methionine" description="Removed" evidence="25 34">
    <location>
        <position position="1"/>
    </location>
</feature>
<feature type="chain" id="PRO_0000087549" description="Caprin-1">
    <location>
        <begin position="2"/>
        <end position="709"/>
    </location>
</feature>
<feature type="region of interest" description="Disordered" evidence="3">
    <location>
        <begin position="1"/>
        <end position="50"/>
    </location>
</feature>
<feature type="region of interest" description="Disordered" evidence="3">
    <location>
        <begin position="260"/>
        <end position="291"/>
    </location>
</feature>
<feature type="region of interest" description="G3BP1-binding" evidence="5 24">
    <location>
        <begin position="360"/>
        <end position="381"/>
    </location>
</feature>
<feature type="region of interest" description="Disordered" evidence="3">
    <location>
        <begin position="417"/>
        <end position="446"/>
    </location>
</feature>
<feature type="region of interest" description="Disordered" evidence="3">
    <location>
        <begin position="475"/>
        <end position="499"/>
    </location>
</feature>
<feature type="region of interest" description="Disordered" evidence="14">
    <location>
        <begin position="524"/>
        <end position="709"/>
    </location>
</feature>
<feature type="coiled-coil region" evidence="2">
    <location>
        <begin position="60"/>
        <end position="94"/>
    </location>
</feature>
<feature type="coiled-coil region" evidence="2">
    <location>
        <begin position="125"/>
        <end position="153"/>
    </location>
</feature>
<feature type="compositionally biased region" description="Low complexity" evidence="3">
    <location>
        <begin position="1"/>
        <end position="15"/>
    </location>
</feature>
<feature type="compositionally biased region" description="Low complexity" evidence="3">
    <location>
        <begin position="22"/>
        <end position="43"/>
    </location>
</feature>
<feature type="compositionally biased region" description="Acidic residues" evidence="3">
    <location>
        <begin position="271"/>
        <end position="291"/>
    </location>
</feature>
<feature type="compositionally biased region" description="Polar residues" evidence="3">
    <location>
        <begin position="433"/>
        <end position="446"/>
    </location>
</feature>
<feature type="compositionally biased region" description="Low complexity" evidence="3">
    <location>
        <begin position="477"/>
        <end position="491"/>
    </location>
</feature>
<feature type="compositionally biased region" description="Low complexity" evidence="3">
    <location>
        <begin position="537"/>
        <end position="570"/>
    </location>
</feature>
<feature type="compositionally biased region" description="Polar residues" evidence="3">
    <location>
        <begin position="577"/>
        <end position="605"/>
    </location>
</feature>
<feature type="compositionally biased region" description="Polar residues" evidence="3">
    <location>
        <begin position="642"/>
        <end position="657"/>
    </location>
</feature>
<feature type="compositionally biased region" description="Low complexity" evidence="3">
    <location>
        <begin position="676"/>
        <end position="686"/>
    </location>
</feature>
<feature type="compositionally biased region" description="Low complexity" evidence="3">
    <location>
        <begin position="697"/>
        <end position="709"/>
    </location>
</feature>
<feature type="modified residue" description="N-acetylproline" evidence="25 34">
    <location>
        <position position="2"/>
    </location>
</feature>
<feature type="modified residue" description="Phosphoserine" evidence="33">
    <location>
        <position position="10"/>
    </location>
</feature>
<feature type="modified residue" description="Phosphoserine" evidence="35">
    <location>
        <position position="115"/>
    </location>
</feature>
<feature type="modified residue" description="Omega-N-methylarginine" evidence="1">
    <location>
        <position position="165"/>
    </location>
</feature>
<feature type="modified residue" description="Phosphoserine" evidence="37">
    <location>
        <position position="335"/>
    </location>
</feature>
<feature type="modified residue" description="Phosphoserine" evidence="37">
    <location>
        <position position="343"/>
    </location>
</feature>
<feature type="modified residue" description="Phosphotyrosine; by EPHA4" evidence="14">
    <location>
        <position position="625"/>
    </location>
</feature>
<feature type="modified residue" description="Omega-N-methylarginine" evidence="36">
    <location>
        <position position="626"/>
    </location>
</feature>
<feature type="modified residue" description="Omega-N-methylarginine" evidence="36">
    <location>
        <position position="633"/>
    </location>
</feature>
<feature type="modified residue" description="Phosphotyrosine; by EPHA4" evidence="14">
    <location>
        <position position="636"/>
    </location>
</feature>
<feature type="modified residue" description="Phosphotyrosine; by EPHA4" evidence="14">
    <location>
        <position position="639"/>
    </location>
</feature>
<feature type="modified residue" description="Omega-N-methylarginine" evidence="36">
    <location>
        <position position="640"/>
    </location>
</feature>
<feature type="modified residue" description="Phosphotyrosine; by EPHA4" evidence="14">
    <location>
        <position position="651"/>
    </location>
</feature>
<feature type="modified residue" description="Phosphotyrosine; by EPHA4" evidence="14">
    <location>
        <position position="662"/>
    </location>
</feature>
<feature type="modified residue" description="Phosphotyrosine; by EPHA4" evidence="14">
    <location>
        <position position="665"/>
    </location>
</feature>
<feature type="modified residue" description="Phosphotyrosine; by EPHA4" evidence="14">
    <location>
        <position position="670"/>
    </location>
</feature>
<feature type="modified residue" description="Asymmetric dimethylarginine; alternate" evidence="36">
    <location>
        <position position="698"/>
    </location>
</feature>
<feature type="modified residue" description="Omega-N-methylarginine; alternate" evidence="36">
    <location>
        <position position="698"/>
    </location>
</feature>
<feature type="glycosylation site" description="O-linked (GlcNAc) serine" evidence="18">
    <location>
        <position position="644"/>
    </location>
</feature>
<feature type="glycosylation site" description="O-linked (GlcNAc) serine" evidence="18">
    <location>
        <position position="649"/>
    </location>
</feature>
<feature type="splice variant" id="VSP_062521" description="In isoform 3." evidence="25">
    <location>
        <begin position="1"/>
        <end position="116"/>
    </location>
</feature>
<feature type="splice variant" id="VSP_032687" description="In isoform 2." evidence="30">
    <original>RGGPPRPNRGMPQMNTQQVN</original>
    <variation>NILWW</variation>
    <location>
        <begin position="690"/>
        <end position="709"/>
    </location>
</feature>
<feature type="sequence variant" id="VAR_042425" description="In dbSNP:rs1132973." evidence="26">
    <original>A</original>
    <variation>D</variation>
    <location>
        <position position="263"/>
    </location>
</feature>
<feature type="sequence variant" id="VAR_089530" description="In NEDLAAD; likely pathogenic." evidence="20">
    <location>
        <begin position="298"/>
        <end position="709"/>
    </location>
</feature>
<feature type="sequence variant" id="VAR_089531" description="In NEDLAAD; likely pathogenic." evidence="20">
    <location>
        <begin position="310"/>
        <end position="709"/>
    </location>
</feature>
<feature type="sequence variant" id="VAR_089532" description="In NEDLAAD; likely pathogenic." evidence="20">
    <location>
        <begin position="358"/>
        <end position="709"/>
    </location>
</feature>
<feature type="sequence variant" id="VAR_088961" description="Found in a patient with a neurodevelopmental disorder; uncertain significance; decreased function in stress granule formation shown by rescue assays in transfected CAPRIN1-deficient cells; impaired interaction with G3BP1 and G3BP2." evidence="19">
    <original>I</original>
    <variation>K</variation>
    <location>
        <position position="373"/>
    </location>
</feature>
<feature type="sequence variant" id="VAR_089533" description="In NEDLAAD; likely pathogenic; 50% decrease of transcript and protein levels in patient-derived cells compared to controls." evidence="20">
    <location>
        <begin position="399"/>
        <end position="709"/>
    </location>
</feature>
<feature type="sequence variant" id="VAR_088962" description="Found in a patient with a neurodevelopmental disorder; uncertain significance; no effect on function in stress granule formation shown by rescue assays in transfected CAPRIN1-deficient cells; no effect on interaction with G3BP1 and G3BP2." evidence="19">
    <original>Q</original>
    <variation>H</variation>
    <location>
        <position position="446"/>
    </location>
</feature>
<feature type="sequence variant" id="VAR_089534" description="In NEDLAAD; likely pathogenic." evidence="20">
    <location>
        <begin position="458"/>
        <end position="709"/>
    </location>
</feature>
<feature type="sequence variant" id="VAR_088963" description="Found in a patient with a neurodevelopmental disorder; uncertain significance; no effect on function in stress granule formation shown by rescue assays in transfected CAPRIN1-deficient cells; no effect on interaction with G3BP1 and G3BP2." evidence="19">
    <original>L</original>
    <variation>P</variation>
    <location>
        <position position="484"/>
    </location>
</feature>
<feature type="sequence variant" id="VAR_089188" description="In CONDCAC; likely pathogenic; results in altered dynamics of stress granule formation and resolution; increased protein stability measured by nano-differential scanning fluorimetry; increased protein aggregation; no effect on oligomerization." evidence="22">
    <original>P</original>
    <variation>L</variation>
    <location>
        <position position="512"/>
    </location>
</feature>
<feature type="sequence variant" id="VAR_089535" description="In NEDLAAD; likely pathogenic; 50% decrease of transcript and protein levels in patient-derived cells compared to controls." evidence="20">
    <location>
        <begin position="582"/>
        <end position="709"/>
    </location>
</feature>
<feature type="sequence variant" id="VAR_042426" description="In dbSNP:rs12282627.">
    <original>Q</original>
    <variation>H</variation>
    <location>
        <position position="588"/>
    </location>
</feature>
<feature type="sequence variant" id="VAR_042427" description="In dbSNP:rs11552285.">
    <original>R</original>
    <variation>H</variation>
    <location>
        <position position="616"/>
    </location>
</feature>
<feature type="mutagenesis site" description="Abolished interaction with G3BP1." evidence="23">
    <original>Y</original>
    <variation>A</variation>
    <variation>G</variation>
    <variation>P</variation>
    <variation>V</variation>
    <variation>W</variation>
    <variation>D</variation>
    <variation>E</variation>
    <variation>R</variation>
    <variation>H</variation>
    <variation>K</variation>
    <variation>S</variation>
    <variation>C</variation>
    <variation>T</variation>
    <variation>M</variation>
    <variation>N</variation>
    <variation>Q</variation>
    <location>
        <position position="370"/>
    </location>
</feature>
<feature type="mutagenesis site" description="Abolished interaction with G3BP1 and ability to promote stress granule formation." evidence="16 23">
    <original>F</original>
    <variation>A</variation>
    <variation>G</variation>
    <variation>I</variation>
    <variation>L</variation>
    <variation>P</variation>
    <variation>V</variation>
    <variation>W</variation>
    <variation>Y</variation>
    <variation>D</variation>
    <variation>E</variation>
    <variation>R</variation>
    <variation>H</variation>
    <variation>K</variation>
    <variation>S</variation>
    <variation>C</variation>
    <variation>T</variation>
    <variation>M</variation>
    <variation>N</variation>
    <variation>Q</variation>
    <location>
        <position position="372"/>
    </location>
</feature>
<feature type="mutagenesis site" description="Abolished interaction with G3BP1." evidence="23">
    <original>I</original>
    <variation>A</variation>
    <variation>G</variation>
    <variation>P</variation>
    <variation>V</variation>
    <variation>D</variation>
    <variation>E</variation>
    <variation>R</variation>
    <variation>H</variation>
    <variation>K</variation>
    <variation>S</variation>
    <variation>C</variation>
    <variation>T</variation>
    <variation>M</variation>
    <variation>N</variation>
    <variation>Q</variation>
    <location>
        <position position="373"/>
    </location>
</feature>
<feature type="mutagenesis site" description="Increased interaction with G3BP1." evidence="23">
    <original>I</original>
    <variation>F</variation>
    <location>
        <position position="373"/>
    </location>
</feature>
<feature type="mutagenesis site" description="Abolished interaction with G3BP1." evidence="23">
    <original>S</original>
    <variation>A</variation>
    <variation>G</variation>
    <variation>I</variation>
    <variation>L</variation>
    <variation>P</variation>
    <variation>V</variation>
    <variation>F</variation>
    <variation>E</variation>
    <variation>R</variation>
    <variation>H</variation>
    <variation>T</variation>
    <variation>M</variation>
    <variation>Q</variation>
    <location>
        <position position="376"/>
    </location>
</feature>
<feature type="mutagenesis site" description="Increased interaction with G3BP1." evidence="23">
    <original>S</original>
    <variation>C</variation>
    <location>
        <position position="376"/>
    </location>
</feature>
<feature type="mutagenesis site" description="Increased interaction with G3BP1." evidence="23">
    <original>M</original>
    <variation>F</variation>
    <variation>Y</variation>
    <location>
        <position position="377"/>
    </location>
</feature>
<feature type="mutagenesis site" description="Abolished interaction with G3BP1." evidence="23">
    <original>M</original>
    <variation>G</variation>
    <variation>P</variation>
    <variation>K</variation>
    <location>
        <position position="377"/>
    </location>
</feature>
<feature type="mutagenesis site" description="Abolished ability to undergo liquid-liquid phase separation for the formation of a membraneless compartment; when associated with K-612, K-616, K-619, K-626, K-633, K-640, K-660, K-667, K-676, K-684, K-688, K-690, K-695 and K-698." evidence="14">
    <original>R</original>
    <variation>K</variation>
    <location>
        <position position="608"/>
    </location>
</feature>
<feature type="mutagenesis site" description="Major reduction in MYC and CCND2 RNA-binding; when associated with A-633 and A-690." evidence="5">
    <original>R</original>
    <variation>A</variation>
    <location>
        <position position="612"/>
    </location>
</feature>
<feature type="mutagenesis site" description="Abolished ability to undergo liquid-liquid phase separation for the formation of a membraneless compartment; when associated with K-608, K-616, K-619, K-626, K-633, K-640, K-660, K-667, K-676, K-684, K-688, K-690, K-695 and K-698." evidence="14">
    <original>R</original>
    <variation>K</variation>
    <location>
        <position position="612"/>
    </location>
</feature>
<feature type="mutagenesis site" description="Abolished ability to undergo liquid-liquid phase separation for the formation of a membraneless compartment; when associated with K-608, K-612, K-619, K-626, K-633, K-640, K-660, K-667, K-676, K-684, K-688, K-690, K-695 and K-698." evidence="14">
    <original>R</original>
    <variation>K</variation>
    <location>
        <position position="616"/>
    </location>
</feature>
<feature type="mutagenesis site" description="Abolished ability to undergo liquid-liquid phase separation for the formation of a membraneless compartment; when associated with K-608, K-612, K-616, K-626, K-633, K-640, K-660, K-667, K-676, K-684, K-688, K-690, K-695 and K-698." evidence="14">
    <original>R</original>
    <variation>K</variation>
    <location>
        <position position="619"/>
    </location>
</feature>
<feature type="mutagenesis site" description="Decreased ability to undergo liquid-liquid phase separation." evidence="18">
    <original>GYR</original>
    <variation>ASA</variation>
    <location>
        <begin position="624"/>
        <end position="626"/>
    </location>
</feature>
<feature type="mutagenesis site" description="Abolished ability to undergo liquid-liquid phase separation for the formation of a membraneless compartment; when associated with K-608, K-612, K-616, K-619, K-633, K-640, K-660, K-667, K-676, K-684, K-688, K-690, K-695 and K-698." evidence="14">
    <original>R</original>
    <variation>K</variation>
    <location>
        <position position="626"/>
    </location>
</feature>
<feature type="mutagenesis site" description="Major reduction in MYC and CCND2 RNA-binding; when associated with A-612 and A-690." evidence="5">
    <original>R</original>
    <variation>A</variation>
    <location>
        <position position="633"/>
    </location>
</feature>
<feature type="mutagenesis site" description="Abolished ability to undergo liquid-liquid phase separation for the formation of a membraneless compartment; when associated with K-608, K-612, K-616, K-619, K-626, K-640, K-660, K-667, K-676, K-684, K-688, K-690, K-695 and K-698." evidence="14">
    <original>R</original>
    <variation>K</variation>
    <location>
        <position position="633"/>
    </location>
</feature>
<feature type="mutagenesis site" description="Decreased ability to undergo liquid-liquid phase separation." evidence="18">
    <original>GYR</original>
    <variation>ASA</variation>
    <location>
        <begin position="638"/>
        <end position="640"/>
    </location>
</feature>
<feature type="mutagenesis site" description="Abolished ability to undergo liquid-liquid phase separation for the formation of a membraneless compartment; when associated with K-608, K-612, K-616, K-619, K-626, K-633, K-660, K-667, K-676, K-684, K-688, K-690, K-695 and K-698." evidence="14">
    <original>R</original>
    <variation>K</variation>
    <location>
        <position position="640"/>
    </location>
</feature>
<feature type="mutagenesis site" description="Decreased ability to undergo liquid-liquid phase separation." evidence="18">
    <original>RDY</original>
    <variation>ASA</variation>
    <location>
        <begin position="660"/>
        <end position="662"/>
    </location>
</feature>
<feature type="mutagenesis site" description="Abolished ability to undergo liquid-liquid phase separation for the formation of a membraneless compartment; when associated with K-608, K-612, K-616, K-619, K-626, K-633, K-640, K-667, K-676, K-684, K-688, K-690, K-695 and K-698." evidence="14">
    <original>R</original>
    <variation>K</variation>
    <location>
        <position position="660"/>
    </location>
</feature>
<feature type="mutagenesis site" description="Abolished ability to undergo liquid-liquid phase separation for the formation of a membraneless compartment; when associated with K-608, K-612, K-616, K-619, K-626, K-633, K-640, K-660, K-676, K-684, K-688, K-690, K-695 and K-698." evidence="14">
    <original>R</original>
    <variation>K</variation>
    <location>
        <position position="667"/>
    </location>
</feature>
<feature type="mutagenesis site" description="Abolished ability to undergo liquid-liquid phase separation for the formation of a membraneless compartment; when associated with K-608, K-612, K-616, K-619, K-626, K-633, K-640, K-660, K-667, K-684, K-688, K-690, K-695 and K-698." evidence="14">
    <original>R</original>
    <variation>K</variation>
    <location>
        <position position="676"/>
    </location>
</feature>
<feature type="mutagenesis site" description="Does not affect ability to undergo liquid-liquid phase separation." evidence="18">
    <original>QSG</original>
    <variation>ASA</variation>
    <location>
        <begin position="680"/>
        <end position="682"/>
    </location>
</feature>
<feature type="mutagenesis site" description="Abolished ability to undergo liquid-liquid phase separation for the formation of a membraneless compartment; when associated with K-608, K-612, K-616, K-619, K-626, K-633, K-640, K-660, K-667, K-676, K-688, K-690, K-695 and K-698." evidence="14">
    <original>R</original>
    <variation>K</variation>
    <location>
        <position position="684"/>
    </location>
</feature>
<feature type="mutagenesis site" description="Abolished ability to undergo liquid-liquid phase separation for the formation of a membraneless compartment; when associated with K-608, K-612, K-616, K-619, K-626, K-633, K-640, K-660, K-667, K-676, K-684, K-690, K-695 and K-698." evidence="14">
    <original>R</original>
    <variation>K</variation>
    <location>
        <position position="688"/>
    </location>
</feature>
<feature type="mutagenesis site" description="Major reduction in MYC and CCND2 RNA-binding; when associated with A-612 and A-633." evidence="5">
    <original>R</original>
    <variation>A</variation>
    <location>
        <position position="690"/>
    </location>
</feature>
<feature type="mutagenesis site" description="Abolished ability to undergo liquid-liquid phase separation for the formation of a membraneless compartment; when associated with K-608, K-612, K-616, K-619, K-626, K-633, K-640, K-660, K-667, K-676, K-684, K-688, K-695 and K-698." evidence="14">
    <original>R</original>
    <variation>K</variation>
    <location>
        <position position="690"/>
    </location>
</feature>
<feature type="mutagenesis site" description="Abolished ability to undergo liquid-liquid phase separation for the formation of a membraneless compartment; when associated with K-608, K-612, K-616, K-619, K-626, K-633, K-640, K-660, K-667, K-676, K-684, K-688, K-690 and K-698." evidence="14">
    <original>R</original>
    <variation>K</variation>
    <location>
        <position position="695"/>
    </location>
</feature>
<feature type="mutagenesis site" description="Abolished ability to undergo liquid-liquid phase separation for the formation of a membraneless compartment; when associated with K-608, K-612, K-616, K-619, K-626, K-633, K-640, K-660, K-667, K-676, K-684, K-688, K-690 and K-695." evidence="14">
    <original>R</original>
    <variation>K</variation>
    <location>
        <position position="698"/>
    </location>
</feature>
<feature type="mutagenesis site" description="Does not affect ability to undergo liquid-liquid phase separation." evidence="18">
    <original>NTQ</original>
    <variation>ASA</variation>
    <location>
        <begin position="704"/>
        <end position="706"/>
    </location>
</feature>
<feature type="sequence conflict" description="In Ref. 1; CAA88096." evidence="30" ref="1">
    <original>Y</original>
    <variation>D</variation>
    <location>
        <position position="370"/>
    </location>
</feature>
<feature type="helix" evidence="38">
    <location>
        <begin position="133"/>
        <end position="158"/>
    </location>
</feature>
<feature type="helix" evidence="38">
    <location>
        <begin position="162"/>
        <end position="170"/>
    </location>
</feature>
<feature type="strand" evidence="38">
    <location>
        <begin position="172"/>
        <end position="174"/>
    </location>
</feature>
<feature type="helix" evidence="38">
    <location>
        <begin position="180"/>
        <end position="193"/>
    </location>
</feature>
<feature type="helix" evidence="38">
    <location>
        <begin position="203"/>
        <end position="206"/>
    </location>
</feature>
<feature type="helix" evidence="38">
    <location>
        <begin position="208"/>
        <end position="219"/>
    </location>
</feature>
<feature type="strand" evidence="39">
    <location>
        <begin position="223"/>
        <end position="225"/>
    </location>
</feature>
<feature type="helix" evidence="38">
    <location>
        <begin position="230"/>
        <end position="242"/>
    </location>
</feature>
<feature type="helix" evidence="38">
    <location>
        <begin position="245"/>
        <end position="247"/>
    </location>
</feature>
<feature type="helix" evidence="40">
    <location>
        <begin position="364"/>
        <end position="366"/>
    </location>
</feature>
<feature type="strand" evidence="40">
    <location>
        <begin position="368"/>
        <end position="371"/>
    </location>
</feature>
<feature type="initiator methionine" description="Removed" evidence="25">
    <location sequence="Q14444-3">
        <position position="1"/>
    </location>
</feature>
<feature type="modified residue" description="N-acetylalanine" evidence="25">
    <location sequence="Q14444-3">
        <position position="2"/>
    </location>
</feature>
<sequence length="709" mass="78366">MPSATSHSGSGSKSSGPPPPSGSSGSEAAAGAGAAAPASQHPATGTGAVQTEAMKQILGVIDKKLRNLEKKKGKLDDYQERMNKGERLNQDQLDAVSKYQEVTNNLEFAKELQRSFMALSQDIQKTIKKTARREQLMREEAEQKRLKTVLELQYVLDKLGDDEVRTDLKQGLNGVPILSEEELSLLDEFYKLVDPERDMSLRLNEQYEHASIHLWDLLEGKEKPVCGTTYKVLKEIVERVFQSNYFDSTHNHQNGLCEEEEAASAPAVEDQVPEAEPEPAEEYTEQSEVESTEYVNRQFMAETQFTSGEKEQVDEWTVETVEVVNSLQQQPQAASPSVPEPHSLTPVAQADPLVRRQRVQDLMAQMQGPYNFIQDSMLDFENQTLDPAIVSAQPMNPTQNMDMPQLVCPPVHSESRLAQPNQVPVQPEATQVPLVSSTSEGYTASQPLYQPSHATEQRPQKEPIDQIQATISLNTDQTTASSSLPAASQPQVFQAGTSKPLHSSGINVNAAPFQSMQTVFNMNAPVPPVNEPETLKQQNQYQASYNQSFSSQPHQVEQTELQQEQLQTVVGTYHGSPDQSHQVTGNHQQPPQQNTGFPRSNQPYYNSRGVSRGGSRGARGLMNGYRGPANGFRGGYDGYRPSFSNTPNSGYTQSQFSAPRDYSGYQRDGYQQNFKRGSGQSGPRGAPRGRGGPPRPNRGMPQMNTQQVN</sequence>
<gene>
    <name evidence="28 32" type="primary">CAPRIN1</name>
    <name type="synonym">GPIAP1</name>
    <name type="synonym">GPIP137</name>
    <name type="synonym">M11S1</name>
    <name type="synonym">RNG105</name>
</gene>